<sequence length="62" mass="6621">MKLTCVLVVLLLVLPFGDLIGVCSTPEGSCVHNGCICQNAPCCHPSGCNWVNVCPGFLWDRS</sequence>
<protein>
    <recommendedName>
        <fullName evidence="3">Conotoxin Cal12.2e</fullName>
    </recommendedName>
    <alternativeName>
        <fullName evidence="2">O1_cal12.2e</fullName>
    </alternativeName>
</protein>
<organism>
    <name type="scientific">Californiconus californicus</name>
    <name type="common">California cone</name>
    <name type="synonym">Conus californicus</name>
    <dbReference type="NCBI Taxonomy" id="1736779"/>
    <lineage>
        <taxon>Eukaryota</taxon>
        <taxon>Metazoa</taxon>
        <taxon>Spiralia</taxon>
        <taxon>Lophotrochozoa</taxon>
        <taxon>Mollusca</taxon>
        <taxon>Gastropoda</taxon>
        <taxon>Caenogastropoda</taxon>
        <taxon>Neogastropoda</taxon>
        <taxon>Conoidea</taxon>
        <taxon>Conidae</taxon>
        <taxon>Californiconus</taxon>
    </lineage>
</organism>
<evidence type="ECO:0000255" key="1"/>
<evidence type="ECO:0000303" key="2">
    <source>
    </source>
</evidence>
<evidence type="ECO:0000305" key="3"/>
<evidence type="ECO:0000305" key="4">
    <source>
    </source>
</evidence>
<dbReference type="GO" id="GO:0005576">
    <property type="term" value="C:extracellular region"/>
    <property type="evidence" value="ECO:0007669"/>
    <property type="project" value="UniProtKB-SubCell"/>
</dbReference>
<dbReference type="GO" id="GO:0090729">
    <property type="term" value="F:toxin activity"/>
    <property type="evidence" value="ECO:0007669"/>
    <property type="project" value="UniProtKB-KW"/>
</dbReference>
<proteinExistence type="inferred from homology"/>
<reference key="1">
    <citation type="journal article" date="2019" name="Toxins">
        <title>The diversified O-superfamily in Californiconus californicus presents a conotoxin with antimycobacterial activity.</title>
        <authorList>
            <person name="Bernaldez-Sarabia J."/>
            <person name="Figueroa-Montiel A."/>
            <person name="Duenas S."/>
            <person name="Cervantes-Luevano K."/>
            <person name="Beltran J.A."/>
            <person name="Ortiz E."/>
            <person name="Jimenez S."/>
            <person name="Possani L.D."/>
            <person name="Paniagua-Solis J.F."/>
            <person name="Gonzalez-Canudas J."/>
            <person name="Licea-Navarro A."/>
        </authorList>
    </citation>
    <scope>NUCLEOTIDE SEQUENCE [MRNA]</scope>
    <source>
        <tissue>Venom duct</tissue>
    </source>
</reference>
<keyword id="KW-1015">Disulfide bond</keyword>
<keyword id="KW-0528">Neurotoxin</keyword>
<keyword id="KW-0964">Secreted</keyword>
<keyword id="KW-0732">Signal</keyword>
<keyword id="KW-0800">Toxin</keyword>
<comment type="function">
    <text evidence="3">Probable neurotoxin.</text>
</comment>
<comment type="subcellular location">
    <subcellularLocation>
        <location evidence="4">Secreted</location>
    </subcellularLocation>
</comment>
<comment type="tissue specificity">
    <text evidence="4">Expressed by the venom duct.</text>
</comment>
<comment type="domain">
    <text evidence="3">The cysteine framework is XII (C-C-C-C-CC-C-C).</text>
</comment>
<comment type="PTM">
    <text evidence="4">Contains 4 disulfide bonds.</text>
</comment>
<comment type="similarity">
    <text evidence="3">Belongs to the conotoxin O1 superfamily.</text>
</comment>
<feature type="signal peptide" evidence="1">
    <location>
        <begin position="1"/>
        <end position="19"/>
    </location>
</feature>
<feature type="chain" id="PRO_0000450954" description="Conotoxin Cal12.2e" evidence="3">
    <location>
        <begin position="20"/>
        <end position="62"/>
    </location>
</feature>
<accession>P0DTX2</accession>
<name>O1C2E_CONCL</name>